<protein>
    <recommendedName>
        <fullName evidence="2">Small ribosomal subunit protein eS19</fullName>
    </recommendedName>
    <alternativeName>
        <fullName>40S ribosomal protein S19</fullName>
    </alternativeName>
    <alternativeName>
        <fullName>S16</fullName>
    </alternativeName>
</protein>
<evidence type="ECO:0000256" key="1">
    <source>
        <dbReference type="SAM" id="MobiDB-lite"/>
    </source>
</evidence>
<evidence type="ECO:0000305" key="2"/>
<proteinExistence type="inferred from homology"/>
<accession>P27073</accession>
<accession>C8V5H8</accession>
<accession>Q5B5X0</accession>
<gene>
    <name type="primary">rps19</name>
    <name type="synonym">rps16</name>
    <name type="ORF">AN4060</name>
</gene>
<organism>
    <name type="scientific">Emericella nidulans (strain FGSC A4 / ATCC 38163 / CBS 112.46 / NRRL 194 / M139)</name>
    <name type="common">Aspergillus nidulans</name>
    <dbReference type="NCBI Taxonomy" id="227321"/>
    <lineage>
        <taxon>Eukaryota</taxon>
        <taxon>Fungi</taxon>
        <taxon>Dikarya</taxon>
        <taxon>Ascomycota</taxon>
        <taxon>Pezizomycotina</taxon>
        <taxon>Eurotiomycetes</taxon>
        <taxon>Eurotiomycetidae</taxon>
        <taxon>Eurotiales</taxon>
        <taxon>Aspergillaceae</taxon>
        <taxon>Aspergillus</taxon>
        <taxon>Aspergillus subgen. Nidulantes</taxon>
    </lineage>
</organism>
<sequence length="148" mass="16450">MGGVTVRDVDAQKFIVAYAAFLKRQGKLPIPGWVDTVKTSASNELPPQDADWYYVRAAAVARHIYLRKTVGVGRLRKVHGSTKNRGSRPAHHVDASGAVDRKVLQSLEKIGVLEQDEEKGGRRITQSGQRDLDRIAKTTVDEEEEDDE</sequence>
<dbReference type="EMBL" id="M65259">
    <property type="protein sequence ID" value="AAA33322.1"/>
    <property type="molecule type" value="Genomic_DNA"/>
</dbReference>
<dbReference type="EMBL" id="AACD01000066">
    <property type="protein sequence ID" value="EAA58948.1"/>
    <property type="molecule type" value="Genomic_DNA"/>
</dbReference>
<dbReference type="EMBL" id="BN001302">
    <property type="protein sequence ID" value="CBF74787.1"/>
    <property type="molecule type" value="Genomic_DNA"/>
</dbReference>
<dbReference type="PIR" id="JQ1349">
    <property type="entry name" value="JQ1349"/>
</dbReference>
<dbReference type="RefSeq" id="XP_661664.1">
    <property type="nucleotide sequence ID" value="XM_656572.1"/>
</dbReference>
<dbReference type="SMR" id="P27073"/>
<dbReference type="FunCoup" id="P27073">
    <property type="interactions" value="818"/>
</dbReference>
<dbReference type="STRING" id="227321.P27073"/>
<dbReference type="EnsemblFungi" id="CBF74787">
    <property type="protein sequence ID" value="CBF74787"/>
    <property type="gene ID" value="ANIA_04060"/>
</dbReference>
<dbReference type="KEGG" id="ani:ANIA_04060"/>
<dbReference type="VEuPathDB" id="FungiDB:AN4060"/>
<dbReference type="eggNOG" id="KOG3411">
    <property type="taxonomic scope" value="Eukaryota"/>
</dbReference>
<dbReference type="HOGENOM" id="CLU_108559_0_0_1"/>
<dbReference type="InParanoid" id="P27073"/>
<dbReference type="OMA" id="WAPFVKT"/>
<dbReference type="OrthoDB" id="428974at2759"/>
<dbReference type="Proteomes" id="UP000000560">
    <property type="component" value="Chromosome II"/>
</dbReference>
<dbReference type="GO" id="GO:0022627">
    <property type="term" value="C:cytosolic small ribosomal subunit"/>
    <property type="evidence" value="ECO:0000250"/>
    <property type="project" value="AspGD"/>
</dbReference>
<dbReference type="GO" id="GO:0003723">
    <property type="term" value="F:RNA binding"/>
    <property type="evidence" value="ECO:0000318"/>
    <property type="project" value="GO_Central"/>
</dbReference>
<dbReference type="GO" id="GO:0003735">
    <property type="term" value="F:structural constituent of ribosome"/>
    <property type="evidence" value="ECO:0000318"/>
    <property type="project" value="GO_Central"/>
</dbReference>
<dbReference type="GO" id="GO:0000028">
    <property type="term" value="P:ribosomal small subunit assembly"/>
    <property type="evidence" value="ECO:0000318"/>
    <property type="project" value="GO_Central"/>
</dbReference>
<dbReference type="GO" id="GO:0042274">
    <property type="term" value="P:ribosomal small subunit biogenesis"/>
    <property type="evidence" value="ECO:0000250"/>
    <property type="project" value="AspGD"/>
</dbReference>
<dbReference type="GO" id="GO:0006412">
    <property type="term" value="P:translation"/>
    <property type="evidence" value="ECO:0007669"/>
    <property type="project" value="InterPro"/>
</dbReference>
<dbReference type="FunFam" id="1.10.10.10:FF:000118">
    <property type="entry name" value="40S ribosomal protein S19"/>
    <property type="match status" value="1"/>
</dbReference>
<dbReference type="Gene3D" id="1.10.10.10">
    <property type="entry name" value="Winged helix-like DNA-binding domain superfamily/Winged helix DNA-binding domain"/>
    <property type="match status" value="1"/>
</dbReference>
<dbReference type="InterPro" id="IPR001266">
    <property type="entry name" value="Ribosomal_eS19"/>
</dbReference>
<dbReference type="InterPro" id="IPR018277">
    <property type="entry name" value="Ribosomal_eS19_CS"/>
</dbReference>
<dbReference type="InterPro" id="IPR036388">
    <property type="entry name" value="WH-like_DNA-bd_sf"/>
</dbReference>
<dbReference type="InterPro" id="IPR036390">
    <property type="entry name" value="WH_DNA-bd_sf"/>
</dbReference>
<dbReference type="PANTHER" id="PTHR11710">
    <property type="entry name" value="40S RIBOSOMAL PROTEIN S19"/>
    <property type="match status" value="1"/>
</dbReference>
<dbReference type="PANTHER" id="PTHR11710:SF0">
    <property type="entry name" value="40S RIBOSOMAL PROTEIN S19"/>
    <property type="match status" value="1"/>
</dbReference>
<dbReference type="Pfam" id="PF01090">
    <property type="entry name" value="Ribosomal_S19e"/>
    <property type="match status" value="1"/>
</dbReference>
<dbReference type="SMART" id="SM01413">
    <property type="entry name" value="Ribosomal_S19e"/>
    <property type="match status" value="1"/>
</dbReference>
<dbReference type="SUPFAM" id="SSF46785">
    <property type="entry name" value="Winged helix' DNA-binding domain"/>
    <property type="match status" value="1"/>
</dbReference>
<dbReference type="PROSITE" id="PS00628">
    <property type="entry name" value="RIBOSOMAL_S19E"/>
    <property type="match status" value="1"/>
</dbReference>
<reference key="1">
    <citation type="journal article" date="1991" name="Gene">
        <title>Isolation and nucleotide sequence of the ribosomal protein S16-encoding gene from Aspergillus nidulans.</title>
        <authorList>
            <person name="Bradshaw R.E."/>
            <person name="Pillar T.M."/>
        </authorList>
    </citation>
    <scope>NUCLEOTIDE SEQUENCE [GENOMIC DNA]</scope>
</reference>
<reference key="2">
    <citation type="journal article" date="2005" name="Nature">
        <title>Sequencing of Aspergillus nidulans and comparative analysis with A. fumigatus and A. oryzae.</title>
        <authorList>
            <person name="Galagan J.E."/>
            <person name="Calvo S.E."/>
            <person name="Cuomo C."/>
            <person name="Ma L.-J."/>
            <person name="Wortman J.R."/>
            <person name="Batzoglou S."/>
            <person name="Lee S.-I."/>
            <person name="Bastuerkmen M."/>
            <person name="Spevak C.C."/>
            <person name="Clutterbuck J."/>
            <person name="Kapitonov V."/>
            <person name="Jurka J."/>
            <person name="Scazzocchio C."/>
            <person name="Farman M.L."/>
            <person name="Butler J."/>
            <person name="Purcell S."/>
            <person name="Harris S."/>
            <person name="Braus G.H."/>
            <person name="Draht O."/>
            <person name="Busch S."/>
            <person name="D'Enfert C."/>
            <person name="Bouchier C."/>
            <person name="Goldman G.H."/>
            <person name="Bell-Pedersen D."/>
            <person name="Griffiths-Jones S."/>
            <person name="Doonan J.H."/>
            <person name="Yu J."/>
            <person name="Vienken K."/>
            <person name="Pain A."/>
            <person name="Freitag M."/>
            <person name="Selker E.U."/>
            <person name="Archer D.B."/>
            <person name="Penalva M.A."/>
            <person name="Oakley B.R."/>
            <person name="Momany M."/>
            <person name="Tanaka T."/>
            <person name="Kumagai T."/>
            <person name="Asai K."/>
            <person name="Machida M."/>
            <person name="Nierman W.C."/>
            <person name="Denning D.W."/>
            <person name="Caddick M.X."/>
            <person name="Hynes M."/>
            <person name="Paoletti M."/>
            <person name="Fischer R."/>
            <person name="Miller B.L."/>
            <person name="Dyer P.S."/>
            <person name="Sachs M.S."/>
            <person name="Osmani S.A."/>
            <person name="Birren B.W."/>
        </authorList>
    </citation>
    <scope>NUCLEOTIDE SEQUENCE [LARGE SCALE GENOMIC DNA]</scope>
    <source>
        <strain>FGSC A4 / ATCC 38163 / CBS 112.46 / NRRL 194 / M139</strain>
    </source>
</reference>
<reference key="3">
    <citation type="journal article" date="2009" name="Fungal Genet. Biol.">
        <title>The 2008 update of the Aspergillus nidulans genome annotation: a community effort.</title>
        <authorList>
            <person name="Wortman J.R."/>
            <person name="Gilsenan J.M."/>
            <person name="Joardar V."/>
            <person name="Deegan J."/>
            <person name="Clutterbuck J."/>
            <person name="Andersen M.R."/>
            <person name="Archer D."/>
            <person name="Bencina M."/>
            <person name="Braus G."/>
            <person name="Coutinho P."/>
            <person name="von Dohren H."/>
            <person name="Doonan J."/>
            <person name="Driessen A.J."/>
            <person name="Durek P."/>
            <person name="Espeso E."/>
            <person name="Fekete E."/>
            <person name="Flipphi M."/>
            <person name="Estrada C.G."/>
            <person name="Geysens S."/>
            <person name="Goldman G."/>
            <person name="de Groot P.W."/>
            <person name="Hansen K."/>
            <person name="Harris S.D."/>
            <person name="Heinekamp T."/>
            <person name="Helmstaedt K."/>
            <person name="Henrissat B."/>
            <person name="Hofmann G."/>
            <person name="Homan T."/>
            <person name="Horio T."/>
            <person name="Horiuchi H."/>
            <person name="James S."/>
            <person name="Jones M."/>
            <person name="Karaffa L."/>
            <person name="Karanyi Z."/>
            <person name="Kato M."/>
            <person name="Keller N."/>
            <person name="Kelly D.E."/>
            <person name="Kiel J.A."/>
            <person name="Kim J.M."/>
            <person name="van der Klei I.J."/>
            <person name="Klis F.M."/>
            <person name="Kovalchuk A."/>
            <person name="Krasevec N."/>
            <person name="Kubicek C.P."/>
            <person name="Liu B."/>
            <person name="Maccabe A."/>
            <person name="Meyer V."/>
            <person name="Mirabito P."/>
            <person name="Miskei M."/>
            <person name="Mos M."/>
            <person name="Mullins J."/>
            <person name="Nelson D.R."/>
            <person name="Nielsen J."/>
            <person name="Oakley B.R."/>
            <person name="Osmani S.A."/>
            <person name="Pakula T."/>
            <person name="Paszewski A."/>
            <person name="Paulsen I."/>
            <person name="Pilsyk S."/>
            <person name="Pocsi I."/>
            <person name="Punt P.J."/>
            <person name="Ram A.F."/>
            <person name="Ren Q."/>
            <person name="Robellet X."/>
            <person name="Robson G."/>
            <person name="Seiboth B."/>
            <person name="van Solingen P."/>
            <person name="Specht T."/>
            <person name="Sun J."/>
            <person name="Taheri-Talesh N."/>
            <person name="Takeshita N."/>
            <person name="Ussery D."/>
            <person name="vanKuyk P.A."/>
            <person name="Visser H."/>
            <person name="van de Vondervoort P.J."/>
            <person name="de Vries R.P."/>
            <person name="Walton J."/>
            <person name="Xiang X."/>
            <person name="Xiong Y."/>
            <person name="Zeng A.P."/>
            <person name="Brandt B.W."/>
            <person name="Cornell M.J."/>
            <person name="van den Hondel C.A."/>
            <person name="Visser J."/>
            <person name="Oliver S.G."/>
            <person name="Turner G."/>
        </authorList>
    </citation>
    <scope>GENOME REANNOTATION</scope>
    <source>
        <strain>FGSC A4 / ATCC 38163 / CBS 112.46 / NRRL 194 / M139</strain>
    </source>
</reference>
<keyword id="KW-1185">Reference proteome</keyword>
<keyword id="KW-0687">Ribonucleoprotein</keyword>
<keyword id="KW-0689">Ribosomal protein</keyword>
<feature type="chain" id="PRO_0000153832" description="Small ribosomal subunit protein eS19">
    <location>
        <begin position="1"/>
        <end position="148"/>
    </location>
</feature>
<feature type="region of interest" description="Disordered" evidence="1">
    <location>
        <begin position="79"/>
        <end position="98"/>
    </location>
</feature>
<feature type="region of interest" description="Disordered" evidence="1">
    <location>
        <begin position="116"/>
        <end position="148"/>
    </location>
</feature>
<feature type="compositionally biased region" description="Basic residues" evidence="1">
    <location>
        <begin position="79"/>
        <end position="90"/>
    </location>
</feature>
<feature type="compositionally biased region" description="Basic and acidic residues" evidence="1">
    <location>
        <begin position="130"/>
        <end position="140"/>
    </location>
</feature>
<name>RS19_EMENI</name>
<comment type="similarity">
    <text evidence="2">Belongs to the eukaryotic ribosomal protein eS19 family.</text>
</comment>